<protein>
    <recommendedName>
        <fullName>Plexin-A1</fullName>
        <shortName>Plex 1</shortName>
        <shortName>Plexin-1</shortName>
    </recommendedName>
</protein>
<accession>P70206</accession>
<accession>B2RQP7</accession>
<accession>Q5DTR0</accession>
<reference key="1">
    <citation type="journal article" date="1996" name="Biochem. Biophys. Res. Commun.">
        <title>Identification of a neuronal cell surface molecule, plexin, in mice.</title>
        <authorList>
            <person name="Kameyama T."/>
            <person name="Murakami Y."/>
            <person name="Suto F."/>
            <person name="Kawakami A."/>
            <person name="Takagi S."/>
            <person name="Hirata T."/>
            <person name="Fujisawa H."/>
        </authorList>
    </citation>
    <scope>NUCLEOTIDE SEQUENCE [MRNA]</scope>
    <scope>TISSUE SPECIFICITY</scope>
    <source>
        <strain>BALB/cJ</strain>
        <strain>ICR</strain>
        <tissue>Brain</tissue>
    </source>
</reference>
<reference key="2">
    <citation type="journal article" date="2004" name="Genome Res.">
        <title>The status, quality, and expansion of the NIH full-length cDNA project: the Mammalian Gene Collection (MGC).</title>
        <authorList>
            <consortium name="The MGC Project Team"/>
        </authorList>
    </citation>
    <scope>NUCLEOTIDE SEQUENCE [LARGE SCALE MRNA]</scope>
    <source>
        <tissue>Brain</tissue>
    </source>
</reference>
<reference key="3">
    <citation type="submission" date="2005-02" db="EMBL/GenBank/DDBJ databases">
        <title>Prediction of the coding sequences of mouse homologues of KIAA gene. The complete nucleotide sequences of mouse KIAA-homologous cDNAs identified by screening of terminal sequences of cDNA clones randomly sampled from size-fractionated libraries.</title>
        <authorList>
            <person name="Okazaki N."/>
            <person name="Kikuno R.F."/>
            <person name="Ohara R."/>
            <person name="Inamoto S."/>
            <person name="Nagase T."/>
            <person name="Ohara O."/>
            <person name="Koga H."/>
        </authorList>
    </citation>
    <scope>NUCLEOTIDE SEQUENCE [LARGE SCALE MRNA] OF 495-1894</scope>
    <source>
        <tissue>Brain</tissue>
    </source>
</reference>
<reference key="4">
    <citation type="journal article" date="1999" name="Cell">
        <title>Plexin-neuropilin-1 complexes form functional semaphorin-3A receptors.</title>
        <authorList>
            <person name="Takahashi T."/>
            <person name="Fournier A."/>
            <person name="Nakamura F."/>
            <person name="Wang L.-H."/>
            <person name="Murakami Y."/>
            <person name="Kalb R.G."/>
            <person name="Fujisawa H."/>
            <person name="Strittmatter S.M."/>
        </authorList>
    </citation>
    <scope>FUNCTION</scope>
    <scope>INTERACTION WITH NRP1; NRP2; SEMA3A AND SEMA3F</scope>
</reference>
<reference key="5">
    <citation type="journal article" date="2000" name="Mech. Dev.">
        <title>Plexin/neuropilin complexes mediate repulsion by the axonal guidance signal semaphorin 3A.</title>
        <authorList>
            <person name="Rohm B."/>
            <person name="Ottemeyer A."/>
            <person name="Lohrum M."/>
            <person name="Pueschel A.W."/>
        </authorList>
    </citation>
    <scope>FUNCTION</scope>
    <scope>INTERACTION WITH NRP1 AND NRP2</scope>
</reference>
<reference key="6">
    <citation type="journal article" date="2003" name="Biochem. Biophys. Res. Commun.">
        <title>Plexin-A1 and plexin-B1 specifically interact at their cytoplasmic domains.</title>
        <authorList>
            <person name="Usui H."/>
            <person name="Taniguchi M."/>
            <person name="Yokomizo T."/>
            <person name="Shimizu T."/>
        </authorList>
    </citation>
    <scope>INTERACTION WITH PLXNB1</scope>
    <scope>TISSUE SPECIFICITY</scope>
</reference>
<reference key="7">
    <citation type="journal article" date="2004" name="EMBO J.">
        <title>Structural bases for CRMP function in plexin-dependent semaphorin3A signaling.</title>
        <authorList>
            <person name="Deo R.C."/>
            <person name="Schmidt E.F."/>
            <person name="Elhabazi A."/>
            <person name="Togashi H."/>
            <person name="Burley S.K."/>
            <person name="Strittmatter S.M."/>
        </authorList>
    </citation>
    <scope>INTERACTION WITH CRMP1; DPYSL2/CRMP2; DPYSL3/CRMP3 AND DPYSL4/CRMP4</scope>
</reference>
<reference key="8">
    <citation type="journal article" date="2004" name="Genes Dev.">
        <title>Dual roles of Sema6D in cardiac morphogenesis through region-specific association of its receptor, Plexin-A1, with off-track and vascular endothelial growth factor receptor type 2.</title>
        <authorList>
            <person name="Toyofuku T."/>
            <person name="Zhang H."/>
            <person name="Kumanogoh A."/>
            <person name="Takegahara N."/>
            <person name="Suto F."/>
            <person name="Kamei J."/>
            <person name="Aoki K."/>
            <person name="Yabuki M."/>
            <person name="Hori M."/>
            <person name="Fujisawa H."/>
            <person name="Kikutani H."/>
        </authorList>
    </citation>
    <scope>INTERACTION WITH KDR</scope>
</reference>
<reference key="9">
    <citation type="journal article" date="2005" name="Nat. Neurosci.">
        <title>FARP2 triggers signals for Sema3A-mediated axonal repulsion.</title>
        <authorList>
            <person name="Toyofuku T."/>
            <person name="Yoshida J."/>
            <person name="Sugimoto T."/>
            <person name="Zhang H."/>
            <person name="Kumanogoh A."/>
            <person name="Hori M."/>
            <person name="Kikutani H."/>
        </authorList>
    </citation>
    <scope>INTERACTION WITH FARP2 AND RND1</scope>
    <scope>MUTAGENESIS OF 1266-LYS--LYS-1268</scope>
</reference>
<reference key="10">
    <citation type="journal article" date="2006" name="Nat. Cell Biol.">
        <title>Plexin-A1 and its interaction with DAP12 in immune responses and bone homeostasis.</title>
        <authorList>
            <person name="Takegahara N."/>
            <person name="Takamatsu H."/>
            <person name="Toyofuku T."/>
            <person name="Tsujimura T."/>
            <person name="Okuno T."/>
            <person name="Yukawa K."/>
            <person name="Mizui M."/>
            <person name="Yamamoto M."/>
            <person name="Prasad D.V."/>
            <person name="Suzuki K."/>
            <person name="Ishii M."/>
            <person name="Terai K."/>
            <person name="Moriya M."/>
            <person name="Nakatsuji Y."/>
            <person name="Sakoda S."/>
            <person name="Sato S."/>
            <person name="Akira S."/>
            <person name="Takeda K."/>
            <person name="Inui M."/>
            <person name="Takai T."/>
            <person name="Ikawa M."/>
            <person name="Okabe M."/>
            <person name="Kumanogoh A."/>
            <person name="Kikutani H."/>
        </authorList>
    </citation>
    <scope>FUNCTION</scope>
    <scope>INTERACTION WITH TREM2</scope>
    <scope>DISRUPTION PHENOTYPE</scope>
    <scope>SUBCELLULAR LOCATION</scope>
</reference>
<reference key="11">
    <citation type="journal article" date="2009" name="Nat. Biotechnol.">
        <title>Mass-spectrometric identification and relative quantification of N-linked cell surface glycoproteins.</title>
        <authorList>
            <person name="Wollscheid B."/>
            <person name="Bausch-Fluck D."/>
            <person name="Henderson C."/>
            <person name="O'Brien R."/>
            <person name="Bibel M."/>
            <person name="Schiess R."/>
            <person name="Aebersold R."/>
            <person name="Watts J.D."/>
        </authorList>
    </citation>
    <scope>GLYCOSYLATION [LARGE SCALE ANALYSIS] AT ASN-1041</scope>
</reference>
<reference key="12">
    <citation type="journal article" date="2010" name="Cell">
        <title>A tissue-specific atlas of mouse protein phosphorylation and expression.</title>
        <authorList>
            <person name="Huttlin E.L."/>
            <person name="Jedrychowski M.P."/>
            <person name="Elias J.E."/>
            <person name="Goswami T."/>
            <person name="Rad R."/>
            <person name="Beausoleil S.A."/>
            <person name="Villen J."/>
            <person name="Haas W."/>
            <person name="Sowa M.E."/>
            <person name="Gygi S.P."/>
        </authorList>
    </citation>
    <scope>IDENTIFICATION BY MASS SPECTROMETRY [LARGE SCALE ANALYSIS]</scope>
    <source>
        <tissue>Brain</tissue>
        <tissue>Brown adipose tissue</tissue>
        <tissue>Heart</tissue>
        <tissue>Kidney</tissue>
        <tissue>Lung</tissue>
        <tissue>Spleen</tissue>
        <tissue>Testis</tissue>
    </source>
</reference>
<evidence type="ECO:0000255" key="1"/>
<evidence type="ECO:0000255" key="2">
    <source>
        <dbReference type="PROSITE-ProRule" id="PRU00352"/>
    </source>
</evidence>
<evidence type="ECO:0000269" key="3">
    <source>
    </source>
</evidence>
<evidence type="ECO:0000269" key="4">
    <source>
    </source>
</evidence>
<evidence type="ECO:0000269" key="5">
    <source>
    </source>
</evidence>
<evidence type="ECO:0000269" key="6">
    <source>
    </source>
</evidence>
<evidence type="ECO:0000269" key="7">
    <source>
    </source>
</evidence>
<evidence type="ECO:0000269" key="8">
    <source>
    </source>
</evidence>
<evidence type="ECO:0000269" key="9">
    <source>
    </source>
</evidence>
<evidence type="ECO:0000269" key="10">
    <source>
    </source>
</evidence>
<evidence type="ECO:0000269" key="11">
    <source>
    </source>
</evidence>
<evidence type="ECO:0000305" key="12"/>
<evidence type="ECO:0000305" key="13">
    <source>
    </source>
</evidence>
<evidence type="ECO:0007829" key="14">
    <source>
        <dbReference type="PDB" id="5L7N"/>
    </source>
</evidence>
<gene>
    <name type="primary">Plxna1</name>
    <name type="synonym">Kiaa4053</name>
</gene>
<name>PLXA1_MOUSE</name>
<feature type="signal peptide" evidence="1">
    <location>
        <begin position="1"/>
        <end position="27"/>
    </location>
</feature>
<feature type="chain" id="PRO_0000232746" description="Plexin-A1">
    <location>
        <begin position="28"/>
        <end position="1894"/>
    </location>
</feature>
<feature type="topological domain" description="Extracellular" evidence="1">
    <location>
        <begin position="28"/>
        <end position="1242"/>
    </location>
</feature>
<feature type="transmembrane region" description="Helical" evidence="1">
    <location>
        <begin position="1243"/>
        <end position="1263"/>
    </location>
</feature>
<feature type="topological domain" description="Cytoplasmic" evidence="1">
    <location>
        <begin position="1264"/>
        <end position="1894"/>
    </location>
</feature>
<feature type="domain" description="Sema" evidence="2">
    <location>
        <begin position="28"/>
        <end position="510"/>
    </location>
</feature>
<feature type="domain" description="IPT/TIG 1">
    <location>
        <begin position="862"/>
        <end position="957"/>
    </location>
</feature>
<feature type="domain" description="IPT/TIG 2">
    <location>
        <begin position="959"/>
        <end position="1043"/>
    </location>
</feature>
<feature type="domain" description="IPT/TIG 3">
    <location>
        <begin position="1046"/>
        <end position="1145"/>
    </location>
</feature>
<feature type="domain" description="IPT/TIG 4">
    <location>
        <begin position="1148"/>
        <end position="1234"/>
    </location>
</feature>
<feature type="coiled-coil region" evidence="1">
    <location>
        <begin position="1262"/>
        <end position="1315"/>
    </location>
</feature>
<feature type="glycosylation site" description="N-linked (GlcNAc...) asparagine" evidence="1">
    <location>
        <position position="75"/>
    </location>
</feature>
<feature type="glycosylation site" description="N-linked (GlcNAc...) asparagine" evidence="1">
    <location>
        <position position="658"/>
    </location>
</feature>
<feature type="glycosylation site" description="N-linked (GlcNAc...) asparagine" evidence="1">
    <location>
        <position position="670"/>
    </location>
</feature>
<feature type="glycosylation site" description="N-linked (GlcNAc...) asparagine" evidence="1">
    <location>
        <position position="699"/>
    </location>
</feature>
<feature type="glycosylation site" description="N-linked (GlcNAc...) asparagine" evidence="10">
    <location>
        <position position="1041"/>
    </location>
</feature>
<feature type="glycosylation site" description="N-linked (GlcNAc...) asparagine" evidence="1">
    <location>
        <position position="1185"/>
    </location>
</feature>
<feature type="glycosylation site" description="N-linked (GlcNAc...) asparagine" evidence="1">
    <location>
        <position position="1210"/>
    </location>
</feature>
<feature type="disulfide bond" evidence="2">
    <location>
        <begin position="93"/>
        <end position="102"/>
    </location>
</feature>
<feature type="disulfide bond" evidence="2">
    <location>
        <begin position="128"/>
        <end position="136"/>
    </location>
</feature>
<feature type="disulfide bond" evidence="2">
    <location>
        <begin position="284"/>
        <end position="405"/>
    </location>
</feature>
<feature type="disulfide bond" evidence="2">
    <location>
        <begin position="300"/>
        <end position="356"/>
    </location>
</feature>
<feature type="disulfide bond" evidence="2">
    <location>
        <begin position="374"/>
        <end position="393"/>
    </location>
</feature>
<feature type="disulfide bond" evidence="2">
    <location>
        <begin position="513"/>
        <end position="530"/>
    </location>
</feature>
<feature type="disulfide bond" evidence="2">
    <location>
        <begin position="519"/>
        <end position="561"/>
    </location>
</feature>
<feature type="disulfide bond" evidence="2">
    <location>
        <begin position="522"/>
        <end position="539"/>
    </location>
</feature>
<feature type="disulfide bond" evidence="2">
    <location>
        <begin position="533"/>
        <end position="545"/>
    </location>
</feature>
<feature type="disulfide bond" evidence="2">
    <location>
        <begin position="596"/>
        <end position="615"/>
    </location>
</feature>
<feature type="mutagenesis site" description="Loss of interaction with FARP2." evidence="8">
    <original>KRK</original>
    <variation>AAA</variation>
    <location>
        <begin position="1266"/>
        <end position="1268"/>
    </location>
</feature>
<feature type="strand" evidence="14">
    <location>
        <begin position="863"/>
        <end position="868"/>
    </location>
</feature>
<feature type="strand" evidence="14">
    <location>
        <begin position="870"/>
        <end position="873"/>
    </location>
</feature>
<feature type="strand" evidence="14">
    <location>
        <begin position="879"/>
        <end position="887"/>
    </location>
</feature>
<feature type="helix" evidence="14">
    <location>
        <begin position="891"/>
        <end position="893"/>
    </location>
</feature>
<feature type="turn" evidence="14">
    <location>
        <begin position="894"/>
        <end position="896"/>
    </location>
</feature>
<feature type="strand" evidence="14">
    <location>
        <begin position="898"/>
        <end position="900"/>
    </location>
</feature>
<feature type="strand" evidence="14">
    <location>
        <begin position="903"/>
        <end position="907"/>
    </location>
</feature>
<feature type="helix" evidence="14">
    <location>
        <begin position="909"/>
        <end position="911"/>
    </location>
</feature>
<feature type="strand" evidence="14">
    <location>
        <begin position="915"/>
        <end position="922"/>
    </location>
</feature>
<feature type="strand" evidence="14">
    <location>
        <begin position="931"/>
        <end position="933"/>
    </location>
</feature>
<feature type="strand" evidence="14">
    <location>
        <begin position="935"/>
        <end position="938"/>
    </location>
</feature>
<feature type="strand" evidence="14">
    <location>
        <begin position="946"/>
        <end position="949"/>
    </location>
</feature>
<feature type="strand" evidence="14">
    <location>
        <begin position="954"/>
        <end position="957"/>
    </location>
</feature>
<feature type="strand" evidence="14">
    <location>
        <begin position="960"/>
        <end position="970"/>
    </location>
</feature>
<feature type="strand" evidence="14">
    <location>
        <begin position="976"/>
        <end position="983"/>
    </location>
</feature>
<feature type="strand" evidence="14">
    <location>
        <begin position="991"/>
        <end position="994"/>
    </location>
</feature>
<feature type="strand" evidence="14">
    <location>
        <begin position="997"/>
        <end position="1004"/>
    </location>
</feature>
<feature type="strand" evidence="14">
    <location>
        <begin position="1006"/>
        <end position="1012"/>
    </location>
</feature>
<feature type="strand" evidence="14">
    <location>
        <begin position="1017"/>
        <end position="1028"/>
    </location>
</feature>
<feature type="strand" evidence="14">
    <location>
        <begin position="1031"/>
        <end position="1043"/>
    </location>
</feature>
<feature type="strand" evidence="14">
    <location>
        <begin position="1047"/>
        <end position="1057"/>
    </location>
</feature>
<feature type="strand" evidence="14">
    <location>
        <begin position="1063"/>
        <end position="1070"/>
    </location>
</feature>
<feature type="helix" evidence="14">
    <location>
        <begin position="1071"/>
        <end position="1073"/>
    </location>
</feature>
<feature type="strand" evidence="14">
    <location>
        <begin position="1078"/>
        <end position="1083"/>
    </location>
</feature>
<feature type="strand" evidence="14">
    <location>
        <begin position="1086"/>
        <end position="1096"/>
    </location>
</feature>
<feature type="strand" evidence="14">
    <location>
        <begin position="1099"/>
        <end position="1103"/>
    </location>
</feature>
<feature type="strand" evidence="14">
    <location>
        <begin position="1122"/>
        <end position="1127"/>
    </location>
</feature>
<feature type="helix" evidence="14">
    <location>
        <begin position="1132"/>
        <end position="1134"/>
    </location>
</feature>
<feature type="strand" evidence="14">
    <location>
        <begin position="1143"/>
        <end position="1145"/>
    </location>
</feature>
<feature type="strand" evidence="14">
    <location>
        <begin position="1167"/>
        <end position="1173"/>
    </location>
</feature>
<feature type="strand" evidence="14">
    <location>
        <begin position="1187"/>
        <end position="1189"/>
    </location>
</feature>
<feature type="strand" evidence="14">
    <location>
        <begin position="1201"/>
        <end position="1206"/>
    </location>
</feature>
<feature type="strand" evidence="14">
    <location>
        <begin position="1219"/>
        <end position="1221"/>
    </location>
</feature>
<feature type="strand" evidence="14">
    <location>
        <begin position="1224"/>
        <end position="1226"/>
    </location>
</feature>
<comment type="function">
    <text evidence="3 4 9">Coreceptor for SEMA3A, SEMA3C, SEMA3F and SEMA6D. Necessary for signaling by class 3 semaphorins and subsequent remodeling of the cytoskeleton. Plays a role in axon guidance, invasive growth and cell migration. Class 3 semaphorins bind to a complex composed of a neuropilin and a plexin. The plexin modulates the affinity of the complex for specific semaphorins, and its cytoplasmic domain is required for the activation of down-stream signaling events in the cytoplasm. Acts as coreceptor of TREM2 for SEMA6D in dendritic cells and is involved in the generation of immune responses and skeletal homeostasis (PubMed:16715077).</text>
</comment>
<comment type="subunit">
    <text evidence="3 4 5 6 7 8 9">Interacts directly with NRP1 and NRP2 (PubMed:10520994, PubMed:10781943). Interacts with PLXN1B (PubMed:12559962). Interacts with FARP2, RND1 and KDR/VEGFR2 (PubMed:14977921, PubMed:16286926). Binding of SEMA3A leads to dissociation of FARP2 (PubMed:16286926). Interacts with CRMP1, DPYSL2/CRMP2, DPYSL3/CRMP3 and DPYSL4/CRMP4 (PubMed:14685275). Interacts (via TIG domains) with TREM2; the interaction mediates SEMA6D binding and signaling through TYROBP (PubMed:16715077).</text>
</comment>
<comment type="interaction">
    <interactant intactId="EBI-771260">
        <id>P70206</id>
    </interactant>
    <interactant intactId="EBI-1555129">
        <id>P97333</id>
        <label>Nrp1</label>
    </interactant>
    <organismsDiffer>false</organismsDiffer>
    <experiments>4</experiments>
</comment>
<comment type="interaction">
    <interactant intactId="EBI-771260">
        <id>P70206</id>
    </interactant>
    <interactant intactId="EBI-15982016">
        <id>Q99NH8</id>
        <label>Trem2</label>
    </interactant>
    <organismsDiffer>false</organismsDiffer>
    <experiments>4</experiments>
</comment>
<comment type="interaction">
    <interactant intactId="EBI-771260">
        <id>P70206</id>
    </interactant>
    <interactant intactId="EBI-15687021">
        <id>Q8BNV8</id>
        <label>Trem4</label>
    </interactant>
    <organismsDiffer>false</organismsDiffer>
    <experiments>3</experiments>
</comment>
<comment type="subcellular location">
    <subcellularLocation>
        <location evidence="13">Cell membrane</location>
        <topology evidence="1">Single-pass type I membrane protein</topology>
    </subcellularLocation>
</comment>
<comment type="tissue specificity">
    <text evidence="5 11">Ubiquitous.</text>
</comment>
<comment type="disruption phenotype">
    <text evidence="9">Mutants are born with the expected Medelian rations and are fertile. Mutants develope osteopetrosis. Dendritic cells poorly stimulate T-cells.</text>
</comment>
<comment type="similarity">
    <text evidence="12">Belongs to the plexin family.</text>
</comment>
<keyword id="KW-0002">3D-structure</keyword>
<keyword id="KW-1003">Cell membrane</keyword>
<keyword id="KW-0175">Coiled coil</keyword>
<keyword id="KW-1015">Disulfide bond</keyword>
<keyword id="KW-0325">Glycoprotein</keyword>
<keyword id="KW-0472">Membrane</keyword>
<keyword id="KW-1185">Reference proteome</keyword>
<keyword id="KW-0677">Repeat</keyword>
<keyword id="KW-0732">Signal</keyword>
<keyword id="KW-0812">Transmembrane</keyword>
<keyword id="KW-1133">Transmembrane helix</keyword>
<proteinExistence type="evidence at protein level"/>
<dbReference type="EMBL" id="D86948">
    <property type="protein sequence ID" value="BAA13188.1"/>
    <property type="molecule type" value="mRNA"/>
</dbReference>
<dbReference type="EMBL" id="BC138023">
    <property type="protein sequence ID" value="AAI38024.1"/>
    <property type="molecule type" value="mRNA"/>
</dbReference>
<dbReference type="EMBL" id="AK220460">
    <property type="protein sequence ID" value="BAD90489.1"/>
    <property type="molecule type" value="mRNA"/>
</dbReference>
<dbReference type="CCDS" id="CCDS20344.1"/>
<dbReference type="PIR" id="JC4980">
    <property type="entry name" value="JC4980"/>
</dbReference>
<dbReference type="RefSeq" id="NP_032907.1">
    <property type="nucleotide sequence ID" value="NM_008881.2"/>
</dbReference>
<dbReference type="PDB" id="3RYT">
    <property type="method" value="X-ray"/>
    <property type="resolution" value="3.58 A"/>
    <property type="chains" value="A/B=1269-1894"/>
</dbReference>
<dbReference type="PDB" id="5L56">
    <property type="method" value="X-ray"/>
    <property type="resolution" value="4.00 A"/>
    <property type="chains" value="A=37-1236"/>
</dbReference>
<dbReference type="PDB" id="5L59">
    <property type="method" value="X-ray"/>
    <property type="resolution" value="6.00 A"/>
    <property type="chains" value="A/B=37-1236"/>
</dbReference>
<dbReference type="PDB" id="5L5C">
    <property type="method" value="X-ray"/>
    <property type="resolution" value="6.00 A"/>
    <property type="chains" value="A=37-1236"/>
</dbReference>
<dbReference type="PDB" id="5L7N">
    <property type="method" value="X-ray"/>
    <property type="resolution" value="2.20 A"/>
    <property type="chains" value="A=861-1241"/>
</dbReference>
<dbReference type="PDBsum" id="3RYT"/>
<dbReference type="PDBsum" id="5L56"/>
<dbReference type="PDBsum" id="5L59"/>
<dbReference type="PDBsum" id="5L5C"/>
<dbReference type="PDBsum" id="5L7N"/>
<dbReference type="SMR" id="P70206"/>
<dbReference type="BioGRID" id="202261">
    <property type="interactions" value="14"/>
</dbReference>
<dbReference type="CORUM" id="P70206"/>
<dbReference type="DIP" id="DIP-29745N"/>
<dbReference type="FunCoup" id="P70206">
    <property type="interactions" value="762"/>
</dbReference>
<dbReference type="IntAct" id="P70206">
    <property type="interactions" value="7"/>
</dbReference>
<dbReference type="MINT" id="P70206"/>
<dbReference type="STRING" id="10090.ENSMUSP00000131840"/>
<dbReference type="GlyConnect" id="2589">
    <property type="glycosylation" value="4 N-Linked glycans (4 sites)"/>
</dbReference>
<dbReference type="GlyCosmos" id="P70206">
    <property type="glycosylation" value="8 sites, 4 glycans"/>
</dbReference>
<dbReference type="GlyGen" id="P70206">
    <property type="glycosylation" value="10 sites, 10 N-linked glycans (7 sites), 1 O-linked glycan (1 site)"/>
</dbReference>
<dbReference type="iPTMnet" id="P70206"/>
<dbReference type="PhosphoSitePlus" id="P70206"/>
<dbReference type="SwissPalm" id="P70206"/>
<dbReference type="jPOST" id="P70206"/>
<dbReference type="PaxDb" id="10090-ENSMUSP00000131840"/>
<dbReference type="PeptideAtlas" id="P70206"/>
<dbReference type="ProteomicsDB" id="289628"/>
<dbReference type="Pumba" id="P70206"/>
<dbReference type="ABCD" id="P70206">
    <property type="antibodies" value="5 sequenced antibodies"/>
</dbReference>
<dbReference type="Antibodypedia" id="2368">
    <property type="antibodies" value="190 antibodies from 28 providers"/>
</dbReference>
<dbReference type="DNASU" id="18844"/>
<dbReference type="Ensembl" id="ENSMUST00000163139.8">
    <property type="protein sequence ID" value="ENSMUSP00000131840.2"/>
    <property type="gene ID" value="ENSMUSG00000030084.13"/>
</dbReference>
<dbReference type="GeneID" id="18844"/>
<dbReference type="KEGG" id="mmu:18844"/>
<dbReference type="UCSC" id="uc009cwg.2">
    <property type="organism name" value="mouse"/>
</dbReference>
<dbReference type="AGR" id="MGI:107685"/>
<dbReference type="CTD" id="5361"/>
<dbReference type="MGI" id="MGI:107685">
    <property type="gene designation" value="Plxna1"/>
</dbReference>
<dbReference type="VEuPathDB" id="HostDB:ENSMUSG00000030084"/>
<dbReference type="eggNOG" id="KOG3610">
    <property type="taxonomic scope" value="Eukaryota"/>
</dbReference>
<dbReference type="GeneTree" id="ENSGT01050000244850"/>
<dbReference type="HOGENOM" id="CLU_001436_2_0_1"/>
<dbReference type="InParanoid" id="P70206"/>
<dbReference type="OMA" id="CIRDCTP"/>
<dbReference type="OrthoDB" id="125363at2759"/>
<dbReference type="PhylomeDB" id="P70206"/>
<dbReference type="TreeFam" id="TF312962"/>
<dbReference type="Reactome" id="R-MMU-399954">
    <property type="pathway name" value="Sema3A PAK dependent Axon repulsion"/>
</dbReference>
<dbReference type="Reactome" id="R-MMU-399955">
    <property type="pathway name" value="SEMA3A-Plexin repulsion signaling by inhibiting Integrin adhesion"/>
</dbReference>
<dbReference type="Reactome" id="R-MMU-399956">
    <property type="pathway name" value="CRMPs in Sema3A signaling"/>
</dbReference>
<dbReference type="Reactome" id="R-MMU-416700">
    <property type="pathway name" value="Other semaphorin interactions"/>
</dbReference>
<dbReference type="Reactome" id="R-MMU-9013405">
    <property type="pathway name" value="RHOD GTPase cycle"/>
</dbReference>
<dbReference type="Reactome" id="R-MMU-9696273">
    <property type="pathway name" value="RND1 GTPase cycle"/>
</dbReference>
<dbReference type="BioGRID-ORCS" id="18844">
    <property type="hits" value="3 hits in 80 CRISPR screens"/>
</dbReference>
<dbReference type="CD-CODE" id="CE726F99">
    <property type="entry name" value="Postsynaptic density"/>
</dbReference>
<dbReference type="EvolutionaryTrace" id="P70206"/>
<dbReference type="PRO" id="PR:P70206"/>
<dbReference type="Proteomes" id="UP000000589">
    <property type="component" value="Chromosome 6"/>
</dbReference>
<dbReference type="RNAct" id="P70206">
    <property type="molecule type" value="protein"/>
</dbReference>
<dbReference type="Bgee" id="ENSMUSG00000030084">
    <property type="expression patterns" value="Expressed in undifferentiated genital tubercle and 261 other cell types or tissues"/>
</dbReference>
<dbReference type="ExpressionAtlas" id="P70206">
    <property type="expression patterns" value="baseline and differential"/>
</dbReference>
<dbReference type="GO" id="GO:0005829">
    <property type="term" value="C:cytosol"/>
    <property type="evidence" value="ECO:0007669"/>
    <property type="project" value="Ensembl"/>
</dbReference>
<dbReference type="GO" id="GO:0098978">
    <property type="term" value="C:glutamatergic synapse"/>
    <property type="evidence" value="ECO:0000314"/>
    <property type="project" value="SynGO"/>
</dbReference>
<dbReference type="GO" id="GO:0016020">
    <property type="term" value="C:membrane"/>
    <property type="evidence" value="ECO:0000314"/>
    <property type="project" value="MGI"/>
</dbReference>
<dbReference type="GO" id="GO:0005654">
    <property type="term" value="C:nucleoplasm"/>
    <property type="evidence" value="ECO:0007669"/>
    <property type="project" value="Ensembl"/>
</dbReference>
<dbReference type="GO" id="GO:0005886">
    <property type="term" value="C:plasma membrane"/>
    <property type="evidence" value="ECO:0000304"/>
    <property type="project" value="Reactome"/>
</dbReference>
<dbReference type="GO" id="GO:0002116">
    <property type="term" value="C:semaphorin receptor complex"/>
    <property type="evidence" value="ECO:0000314"/>
    <property type="project" value="UniProtKB"/>
</dbReference>
<dbReference type="GO" id="GO:0045202">
    <property type="term" value="C:synapse"/>
    <property type="evidence" value="ECO:0000314"/>
    <property type="project" value="SynGO"/>
</dbReference>
<dbReference type="GO" id="GO:0017154">
    <property type="term" value="F:semaphorin receptor activity"/>
    <property type="evidence" value="ECO:0000314"/>
    <property type="project" value="UniProtKB"/>
</dbReference>
<dbReference type="GO" id="GO:0060666">
    <property type="term" value="P:dichotomous subdivision of terminal units involved in salivary gland branching"/>
    <property type="evidence" value="ECO:0000314"/>
    <property type="project" value="MGI"/>
</dbReference>
<dbReference type="GO" id="GO:0021828">
    <property type="term" value="P:gonadotrophin-releasing hormone neuronal migration to the hypothalamus"/>
    <property type="evidence" value="ECO:0000316"/>
    <property type="project" value="ARUK-UCL"/>
</dbReference>
<dbReference type="GO" id="GO:1990138">
    <property type="term" value="P:neuron projection extension"/>
    <property type="evidence" value="ECO:0000316"/>
    <property type="project" value="MGI"/>
</dbReference>
<dbReference type="GO" id="GO:0097485">
    <property type="term" value="P:neuron projection guidance"/>
    <property type="evidence" value="ECO:0000315"/>
    <property type="project" value="MGI"/>
</dbReference>
<dbReference type="GO" id="GO:0021628">
    <property type="term" value="P:olfactory nerve formation"/>
    <property type="evidence" value="ECO:0000316"/>
    <property type="project" value="ARUK-UCL"/>
</dbReference>
<dbReference type="GO" id="GO:0014910">
    <property type="term" value="P:regulation of smooth muscle cell migration"/>
    <property type="evidence" value="ECO:0000315"/>
    <property type="project" value="MGI"/>
</dbReference>
<dbReference type="GO" id="GO:0071526">
    <property type="term" value="P:semaphorin-plexin signaling pathway"/>
    <property type="evidence" value="ECO:0000314"/>
    <property type="project" value="UniProtKB"/>
</dbReference>
<dbReference type="GO" id="GO:0002291">
    <property type="term" value="P:T cell activation via T cell receptor contact with antigen bound to MHC molecule on antigen presenting cell"/>
    <property type="evidence" value="ECO:0000314"/>
    <property type="project" value="UniProtKB"/>
</dbReference>
<dbReference type="CDD" id="cd00603">
    <property type="entry name" value="IPT_PCSR"/>
    <property type="match status" value="1"/>
</dbReference>
<dbReference type="CDD" id="cd01180">
    <property type="entry name" value="IPT_plexin_repeat1"/>
    <property type="match status" value="1"/>
</dbReference>
<dbReference type="CDD" id="cd01179">
    <property type="entry name" value="IPT_plexin_repeat2"/>
    <property type="match status" value="1"/>
</dbReference>
<dbReference type="CDD" id="cd01181">
    <property type="entry name" value="IPT_plexin_repeat3"/>
    <property type="match status" value="1"/>
</dbReference>
<dbReference type="CDD" id="cd12790">
    <property type="entry name" value="RasGAP_plexin_A"/>
    <property type="match status" value="1"/>
</dbReference>
<dbReference type="CDD" id="cd11271">
    <property type="entry name" value="Sema_plexin_A1"/>
    <property type="match status" value="1"/>
</dbReference>
<dbReference type="FunFam" id="1.10.506.10:FF:000005">
    <property type="entry name" value="Plexin A1"/>
    <property type="match status" value="1"/>
</dbReference>
<dbReference type="FunFam" id="1.10.506.10:FF:000006">
    <property type="entry name" value="Plexin A1"/>
    <property type="match status" value="1"/>
</dbReference>
<dbReference type="FunFam" id="2.60.40.10:FF:000123">
    <property type="entry name" value="Plexin A1"/>
    <property type="match status" value="1"/>
</dbReference>
<dbReference type="FunFam" id="2.60.40.10:FF:000320">
    <property type="entry name" value="Plexin A1"/>
    <property type="match status" value="1"/>
</dbReference>
<dbReference type="FunFam" id="2.130.10.10:FF:000006">
    <property type="entry name" value="Plexin A2"/>
    <property type="match status" value="1"/>
</dbReference>
<dbReference type="FunFam" id="2.60.40.10:FF:000071">
    <property type="entry name" value="Plexin A2"/>
    <property type="match status" value="1"/>
</dbReference>
<dbReference type="FunFam" id="3.10.20.90:FF:000018">
    <property type="entry name" value="Plexin A2"/>
    <property type="match status" value="1"/>
</dbReference>
<dbReference type="FunFam" id="2.60.40.10:FF:000329">
    <property type="entry name" value="Plexin A4"/>
    <property type="match status" value="1"/>
</dbReference>
<dbReference type="FunFam" id="2.60.40.10:FF:001728">
    <property type="entry name" value="Plexin-A1"/>
    <property type="match status" value="1"/>
</dbReference>
<dbReference type="Gene3D" id="1.10.506.10">
    <property type="entry name" value="GTPase Activation - p120gap, domain 1"/>
    <property type="match status" value="2"/>
</dbReference>
<dbReference type="Gene3D" id="2.60.40.10">
    <property type="entry name" value="Immunoglobulins"/>
    <property type="match status" value="5"/>
</dbReference>
<dbReference type="Gene3D" id="2.130.10.10">
    <property type="entry name" value="YVTN repeat-like/Quinoprotein amine dehydrogenase"/>
    <property type="match status" value="1"/>
</dbReference>
<dbReference type="InterPro" id="IPR013783">
    <property type="entry name" value="Ig-like_fold"/>
</dbReference>
<dbReference type="InterPro" id="IPR014756">
    <property type="entry name" value="Ig_E-set"/>
</dbReference>
<dbReference type="InterPro" id="IPR002909">
    <property type="entry name" value="IPT_dom"/>
</dbReference>
<dbReference type="InterPro" id="IPR031148">
    <property type="entry name" value="Plexin"/>
</dbReference>
<dbReference type="InterPro" id="IPR042744">
    <property type="entry name" value="Plexin-A1_Sema"/>
</dbReference>
<dbReference type="InterPro" id="IPR013548">
    <property type="entry name" value="Plexin_cytoplasmic_RasGAP_dom"/>
</dbReference>
<dbReference type="InterPro" id="IPR046800">
    <property type="entry name" value="Plexin_RBD"/>
</dbReference>
<dbReference type="InterPro" id="IPR002165">
    <property type="entry name" value="Plexin_repeat"/>
</dbReference>
<dbReference type="InterPro" id="IPR016201">
    <property type="entry name" value="PSI"/>
</dbReference>
<dbReference type="InterPro" id="IPR008936">
    <property type="entry name" value="Rho_GTPase_activation_prot"/>
</dbReference>
<dbReference type="InterPro" id="IPR001627">
    <property type="entry name" value="Semap_dom"/>
</dbReference>
<dbReference type="InterPro" id="IPR036352">
    <property type="entry name" value="Semap_dom_sf"/>
</dbReference>
<dbReference type="InterPro" id="IPR041019">
    <property type="entry name" value="TIG1_plexin"/>
</dbReference>
<dbReference type="InterPro" id="IPR041362">
    <property type="entry name" value="TIG2_plexin"/>
</dbReference>
<dbReference type="InterPro" id="IPR015943">
    <property type="entry name" value="WD40/YVTN_repeat-like_dom_sf"/>
</dbReference>
<dbReference type="PANTHER" id="PTHR22625">
    <property type="entry name" value="PLEXIN"/>
    <property type="match status" value="1"/>
</dbReference>
<dbReference type="PANTHER" id="PTHR22625:SF35">
    <property type="entry name" value="PLEXIN-A1"/>
    <property type="match status" value="1"/>
</dbReference>
<dbReference type="Pfam" id="PF08337">
    <property type="entry name" value="Plexin_cytopl"/>
    <property type="match status" value="1"/>
</dbReference>
<dbReference type="Pfam" id="PF20170">
    <property type="entry name" value="Plexin_RBD"/>
    <property type="match status" value="1"/>
</dbReference>
<dbReference type="Pfam" id="PF01437">
    <property type="entry name" value="PSI"/>
    <property type="match status" value="2"/>
</dbReference>
<dbReference type="Pfam" id="PF24479">
    <property type="entry name" value="PSI_PlexinA-B"/>
    <property type="match status" value="1"/>
</dbReference>
<dbReference type="Pfam" id="PF01403">
    <property type="entry name" value="Sema"/>
    <property type="match status" value="1"/>
</dbReference>
<dbReference type="Pfam" id="PF01833">
    <property type="entry name" value="TIG"/>
    <property type="match status" value="4"/>
</dbReference>
<dbReference type="Pfam" id="PF18020">
    <property type="entry name" value="TIG_2"/>
    <property type="match status" value="1"/>
</dbReference>
<dbReference type="Pfam" id="PF17960">
    <property type="entry name" value="TIG_plexin"/>
    <property type="match status" value="1"/>
</dbReference>
<dbReference type="SMART" id="SM00429">
    <property type="entry name" value="IPT"/>
    <property type="match status" value="4"/>
</dbReference>
<dbReference type="SMART" id="SM00423">
    <property type="entry name" value="PSI"/>
    <property type="match status" value="3"/>
</dbReference>
<dbReference type="SMART" id="SM00630">
    <property type="entry name" value="Sema"/>
    <property type="match status" value="1"/>
</dbReference>
<dbReference type="SUPFAM" id="SSF81296">
    <property type="entry name" value="E set domains"/>
    <property type="match status" value="4"/>
</dbReference>
<dbReference type="SUPFAM" id="SSF48350">
    <property type="entry name" value="GTPase activation domain, GAP"/>
    <property type="match status" value="1"/>
</dbReference>
<dbReference type="SUPFAM" id="SSF103575">
    <property type="entry name" value="Plexin repeat"/>
    <property type="match status" value="2"/>
</dbReference>
<dbReference type="SUPFAM" id="SSF101912">
    <property type="entry name" value="Sema domain"/>
    <property type="match status" value="1"/>
</dbReference>
<dbReference type="PROSITE" id="PS51004">
    <property type="entry name" value="SEMA"/>
    <property type="match status" value="1"/>
</dbReference>
<sequence>MPLPPLSSRTLLLLLLLLLRGVWIAISSPPAGLGPQPAFRTFVASDWGLTHLVVHEQTGEVYVGAVNRIYKLSGNLTLLRAHVTGPVEDNEKCYPPPSVQSCPHGLGSTDNVNKLLLLDYAANRLLACGSASQGICQFLRLDDLFKLGEPHHRKEHYLSSVREAGSMAGVLIAGPPGQGQAKLFVGTPIDGKSEYFPTLSSRRLMANEEDADMFGFVYQDEFVSSQLKIPSDTLSKFPAFDIYYVYSFRSEQFVYYLTLQLDTQLTSPDAAGEHFFTSKIVRLCVNDPKFYSYVEFPIGCEQAGVEYRLVQDAYLSRPGQALAKQLGLAEDEEVLFTVFAQGQKNRVKPPKESALCLFTLRAIKEKIKERIQSCYRGEGKLSLPWLLNKELGCINSPLQIDDDFCGQDFNQPLGGTVTIEGTPLFVDKEDGLTAVAAYDYQGRTVVFAGTRSGRIRKILVDLANPSGRPALAYESVVAQEGNPILRDLVLSPNRQYLYAMTEKQVTQVPVESCVQYTSCELCLGSRDPHCGWCVLHSICSRQDACERAEEPQRFASDLLQCVQLTVQPRNVSVTMSQVPLVLQAWNVPDLSAGVNCSFEDFTETESILEDGRIHCHSPSAREVAPITQGQGDQRVVKLYLKSKETGKKFASVDFVFYNCSVHQSCLACVNGSFPCHWCKYRHVCTNNAADCAFLEGRVNMSEDCPQILPSTHIYVPVGVVKPITLAARNLPQPQSGQRGYECLFHIPGSPARVTALRFNSSSLQCQNSSYSYEGNDVSDLPVNLSVVWNGNFVIDNPQNIQAHLYKCPALRQSCGLCLKADPRFECGWCVAERRCSLRHHCPADSPASWMHAHHGSSRCTDPKILKLSPETGPRQGGTRLTITGENLGLRFEDVRLGVHVGKVLCSPVESEYISAEQIVCEIGDASTLRAHDALVEVCVRDCSLHYRALSPKRFTFVTPTFYRVSPSRGPLSGGTWIGIEGSHLNAGSDVAVSIGGRPCSFSWRNSREIRCLTPPGHTPGSAPIVININRAQLSNPEVKYNYTEDPTILRIDPEWSINSGGTLLTVTGTNLATVREPRIRAKYGGIERENSCMVYNDTTMVCRAPSIDNPKRSPPELGERPDEIGFIMDNVRTLLVLNSSSFLYYPDPVLEPLSPTGLLELKPSSPLILKGRNLLPPAPGNSRLNYTVLIGSTPCILTVSETQLLCEAPNLTGQHKVTVRAGGFEFSPGMLQVYSDSLLTLPAIVGIGGGGGLLLLVIVAVLIAYKRKSRDADRTLKRLQLQMDNLESRVALECKEAFAELQTDIHELTSDLDGAGIPFLDYRTYAMRVLFPGIEDHPVLKEMEVQANVEKSLTLFGQLLTKKHFLLTFIRTLEAQRSFSMRDRGNVASLIMTALQGEMEYATGVLKQLLSDLIEKNLESKNHPKLLLRRTESVAEKMLTNWFTFLLYKFLKECAGEPLFMLYCAIKQQMEKGPIDAITGEARYSLSEDKLIRQQIDYKTLTLNCVNPEHENAPEVPVKGLNCDTVTQVKEKLLDAVYKGVPYSQRPKAGDMDLEWRQGRMARIILQDEDVTTKIDNDWKRLNTLAHYQVTDGSSVALVPKQTSAYNISNSSTFTKSLSRYESMLRTASSPDSLRSRTPMITPDLESGTKLWHLVKNHDHLDQREGDRGSKMVSEIYLTRLLATKGTLQKFVDDLFETIFSTAHRGSALPLAIKYMFDFLDEQADKHQIHDSDVRHTWKSNCLPLRFWVNVIKNPQFVFDIHKNSITDACLSVVAQTFMDSCSTSEHKLGKDSPSNKLLYAKDIPNYKSWVERYYADIAKMPAISDQDMSAYLAEQSRLHLSQFNSMSALHEIYSYIAKYKDEILVALEKDEQARRQRLRSKLEQVVDTMALSS</sequence>
<organism>
    <name type="scientific">Mus musculus</name>
    <name type="common">Mouse</name>
    <dbReference type="NCBI Taxonomy" id="10090"/>
    <lineage>
        <taxon>Eukaryota</taxon>
        <taxon>Metazoa</taxon>
        <taxon>Chordata</taxon>
        <taxon>Craniata</taxon>
        <taxon>Vertebrata</taxon>
        <taxon>Euteleostomi</taxon>
        <taxon>Mammalia</taxon>
        <taxon>Eutheria</taxon>
        <taxon>Euarchontoglires</taxon>
        <taxon>Glires</taxon>
        <taxon>Rodentia</taxon>
        <taxon>Myomorpha</taxon>
        <taxon>Muroidea</taxon>
        <taxon>Muridae</taxon>
        <taxon>Murinae</taxon>
        <taxon>Mus</taxon>
        <taxon>Mus</taxon>
    </lineage>
</organism>